<sequence length="50" mass="5447">METTNFGFVASLLFVGVPTIFLIGLFISTQDGEKSSFYSDSSKGRLGPKR</sequence>
<protein>
    <recommendedName>
        <fullName evidence="1">Photosystem II reaction center protein M</fullName>
        <shortName evidence="1">PSII-M</shortName>
    </recommendedName>
</protein>
<dbReference type="EMBL" id="CP000576">
    <property type="protein sequence ID" value="ABO16965.1"/>
    <property type="molecule type" value="Genomic_DNA"/>
</dbReference>
<dbReference type="RefSeq" id="WP_011817804.1">
    <property type="nucleotide sequence ID" value="NC_009091.1"/>
</dbReference>
<dbReference type="SMR" id="A3PB40"/>
<dbReference type="STRING" id="167546.P9301_03421"/>
<dbReference type="KEGG" id="pmg:P9301_03421"/>
<dbReference type="HOGENOM" id="CLU_215415_0_0_3"/>
<dbReference type="OrthoDB" id="532820at2"/>
<dbReference type="Proteomes" id="UP000001430">
    <property type="component" value="Chromosome"/>
</dbReference>
<dbReference type="GO" id="GO:0009523">
    <property type="term" value="C:photosystem II"/>
    <property type="evidence" value="ECO:0007669"/>
    <property type="project" value="UniProtKB-KW"/>
</dbReference>
<dbReference type="GO" id="GO:0031676">
    <property type="term" value="C:plasma membrane-derived thylakoid membrane"/>
    <property type="evidence" value="ECO:0007669"/>
    <property type="project" value="UniProtKB-SubCell"/>
</dbReference>
<dbReference type="GO" id="GO:0019684">
    <property type="term" value="P:photosynthesis, light reaction"/>
    <property type="evidence" value="ECO:0007669"/>
    <property type="project" value="InterPro"/>
</dbReference>
<dbReference type="HAMAP" id="MF_00438">
    <property type="entry name" value="PSII_PsbM"/>
    <property type="match status" value="1"/>
</dbReference>
<dbReference type="InterPro" id="IPR007826">
    <property type="entry name" value="PSII_PsbM"/>
</dbReference>
<dbReference type="InterPro" id="IPR037269">
    <property type="entry name" value="PSII_PsbM_sf"/>
</dbReference>
<dbReference type="NCBIfam" id="NF010694">
    <property type="entry name" value="PRK14094.1"/>
    <property type="match status" value="1"/>
</dbReference>
<dbReference type="NCBIfam" id="TIGR03038">
    <property type="entry name" value="PS_II_psbM"/>
    <property type="match status" value="1"/>
</dbReference>
<dbReference type="Pfam" id="PF05151">
    <property type="entry name" value="PsbM"/>
    <property type="match status" value="1"/>
</dbReference>
<dbReference type="SUPFAM" id="SSF161033">
    <property type="entry name" value="Photosystem II reaction center protein M, PsbM"/>
    <property type="match status" value="1"/>
</dbReference>
<keyword id="KW-0472">Membrane</keyword>
<keyword id="KW-0602">Photosynthesis</keyword>
<keyword id="KW-0604">Photosystem II</keyword>
<keyword id="KW-0674">Reaction center</keyword>
<keyword id="KW-1185">Reference proteome</keyword>
<keyword id="KW-0793">Thylakoid</keyword>
<keyword id="KW-0812">Transmembrane</keyword>
<keyword id="KW-1133">Transmembrane helix</keyword>
<evidence type="ECO:0000255" key="1">
    <source>
        <dbReference type="HAMAP-Rule" id="MF_00438"/>
    </source>
</evidence>
<evidence type="ECO:0000305" key="2"/>
<proteinExistence type="inferred from homology"/>
<feature type="chain" id="PRO_1000025955" description="Photosystem II reaction center protein M">
    <location>
        <begin position="1"/>
        <end position="50"/>
    </location>
</feature>
<feature type="transmembrane region" description="Helical" evidence="1">
    <location>
        <begin position="7"/>
        <end position="27"/>
    </location>
</feature>
<accession>A3PB40</accession>
<name>PSBM_PROM0</name>
<comment type="function">
    <text evidence="1">One of the components of the core complex of photosystem II (PSII). PSII is a light-driven water:plastoquinone oxidoreductase that uses light energy to abstract electrons from H(2)O, generating O(2) and a proton gradient subsequently used for ATP formation. It consists of a core antenna complex that captures photons, and an electron transfer chain that converts photonic excitation into a charge separation. This subunit is found at the monomer-monomer interface.</text>
</comment>
<comment type="subunit">
    <text evidence="2">PSII is composed of 1 copy each of membrane proteins PsbA, PsbB, PsbC, PsbD, PsbE, PsbF, PsbH, PsbI, PsbJ, PsbK, PsbL, PsbM, PsbT, PsbX, PsbY, Psb30/Ycf12, peripheral proteins PsbO, CyanoQ (PsbQ), PsbU, PsbV and a large number of cofactors. It forms dimeric complexes.</text>
</comment>
<comment type="subcellular location">
    <subcellularLocation>
        <location evidence="1">Cellular thylakoid membrane</location>
        <topology evidence="1">Single-pass membrane protein</topology>
    </subcellularLocation>
</comment>
<comment type="similarity">
    <text evidence="1">Belongs to the PsbM family.</text>
</comment>
<gene>
    <name evidence="1" type="primary">psbM</name>
    <name type="ordered locus">P9301_03421</name>
</gene>
<reference key="1">
    <citation type="journal article" date="2007" name="PLoS Genet.">
        <title>Patterns and implications of gene gain and loss in the evolution of Prochlorococcus.</title>
        <authorList>
            <person name="Kettler G.C."/>
            <person name="Martiny A.C."/>
            <person name="Huang K."/>
            <person name="Zucker J."/>
            <person name="Coleman M.L."/>
            <person name="Rodrigue S."/>
            <person name="Chen F."/>
            <person name="Lapidus A."/>
            <person name="Ferriera S."/>
            <person name="Johnson J."/>
            <person name="Steglich C."/>
            <person name="Church G.M."/>
            <person name="Richardson P."/>
            <person name="Chisholm S.W."/>
        </authorList>
    </citation>
    <scope>NUCLEOTIDE SEQUENCE [LARGE SCALE GENOMIC DNA]</scope>
    <source>
        <strain>MIT 9301</strain>
    </source>
</reference>
<organism>
    <name type="scientific">Prochlorococcus marinus (strain MIT 9301)</name>
    <dbReference type="NCBI Taxonomy" id="167546"/>
    <lineage>
        <taxon>Bacteria</taxon>
        <taxon>Bacillati</taxon>
        <taxon>Cyanobacteriota</taxon>
        <taxon>Cyanophyceae</taxon>
        <taxon>Synechococcales</taxon>
        <taxon>Prochlorococcaceae</taxon>
        <taxon>Prochlorococcus</taxon>
    </lineage>
</organism>